<sequence>MGGGDLNLKKSWHPQTLRNVEKVWKAEQKHEAERKKIEELQRELREERAREEMQRYAEDVGAVKKKEEKLDWMYQGPGGMVNRDEYLLGRPIDKYVFEKMEEREAGCSSETGLLPGSIFAPSGANSLLDMASKIREDPLFIIRKKEEEKKREVLNNPVKMKKIKELLQMSLEKKEKKKKKEKKKKHRKHKHRSSSSGGSSSEDEQSQARSQKKMANSFPVLSKVPGYGLQVRDSDRNRGLQGSLGEQRAIKNNSRSRSSSPPRHASKKSTKEERPRDRRSRSPSRRSRSPRPSKPHTSKVNRKERDSPSPKKEAYQRRHASGYTRKLSAEELERKRQEMMENAKWREEERLNTLKRHAREDEREHRLERLDSRSGKFLHRMKLESASTSSLEDRVKRNIHSLQRTSVALEKNFMRR</sequence>
<gene>
    <name type="primary">Cwc25</name>
    <name type="synonym">Ccdc49</name>
</gene>
<feature type="chain" id="PRO_0000288866" description="Pre-mRNA-splicing factor CWC25 homolog">
    <location>
        <begin position="1"/>
        <end position="416"/>
    </location>
</feature>
<feature type="region of interest" description="Disordered" evidence="3">
    <location>
        <begin position="164"/>
        <end position="343"/>
    </location>
</feature>
<feature type="coiled-coil region" evidence="2">
    <location>
        <begin position="20"/>
        <end position="70"/>
    </location>
</feature>
<feature type="coiled-coil region" evidence="2">
    <location>
        <begin position="324"/>
        <end position="413"/>
    </location>
</feature>
<feature type="compositionally biased region" description="Basic residues" evidence="3">
    <location>
        <begin position="175"/>
        <end position="193"/>
    </location>
</feature>
<feature type="compositionally biased region" description="Low complexity" evidence="3">
    <location>
        <begin position="251"/>
        <end position="263"/>
    </location>
</feature>
<feature type="compositionally biased region" description="Basic residues" evidence="3">
    <location>
        <begin position="277"/>
        <end position="300"/>
    </location>
</feature>
<feature type="compositionally biased region" description="Basic and acidic residues" evidence="3">
    <location>
        <begin position="301"/>
        <end position="316"/>
    </location>
</feature>
<feature type="compositionally biased region" description="Basic and acidic residues" evidence="3">
    <location>
        <begin position="327"/>
        <end position="343"/>
    </location>
</feature>
<feature type="modified residue" description="Phosphoserine" evidence="1">
    <location>
        <position position="170"/>
    </location>
</feature>
<feature type="modified residue" description="Phosphoserine" evidence="1">
    <location>
        <position position="222"/>
    </location>
</feature>
<feature type="cross-link" description="Glycyl lysine isopeptide (Lys-Gly) (interchain with G-Cter in SUMO2)" evidence="1">
    <location>
        <position position="382"/>
    </location>
</feature>
<feature type="splice variant" id="VSP_025798" description="In isoform 2." evidence="4">
    <location>
        <begin position="1"/>
        <end position="338"/>
    </location>
</feature>
<feature type="splice variant" id="VSP_025799" description="In isoform 3." evidence="4">
    <location>
        <begin position="326"/>
        <end position="416"/>
    </location>
</feature>
<feature type="sequence conflict" description="In Ref. 1; BAB23718." evidence="5" ref="1">
    <original>N</original>
    <variation>D</variation>
    <location>
        <position position="301"/>
    </location>
</feature>
<organism>
    <name type="scientific">Mus musculus</name>
    <name type="common">Mouse</name>
    <dbReference type="NCBI Taxonomy" id="10090"/>
    <lineage>
        <taxon>Eukaryota</taxon>
        <taxon>Metazoa</taxon>
        <taxon>Chordata</taxon>
        <taxon>Craniata</taxon>
        <taxon>Vertebrata</taxon>
        <taxon>Euteleostomi</taxon>
        <taxon>Mammalia</taxon>
        <taxon>Eutheria</taxon>
        <taxon>Euarchontoglires</taxon>
        <taxon>Glires</taxon>
        <taxon>Rodentia</taxon>
        <taxon>Myomorpha</taxon>
        <taxon>Muroidea</taxon>
        <taxon>Muridae</taxon>
        <taxon>Murinae</taxon>
        <taxon>Mus</taxon>
        <taxon>Mus</taxon>
    </lineage>
</organism>
<name>CWC25_MOUSE</name>
<comment type="function">
    <text evidence="1">Involved in pre-mRNA splicing as component of the spliceosome.</text>
</comment>
<comment type="subunit">
    <text evidence="1">Identified in the spliceosome C complex.</text>
</comment>
<comment type="subcellular location">
    <subcellularLocation>
        <location evidence="1">Nucleus</location>
    </subcellularLocation>
</comment>
<comment type="alternative products">
    <event type="alternative splicing"/>
    <isoform>
        <id>Q9DBF7-1</id>
        <name>1</name>
        <sequence type="displayed"/>
    </isoform>
    <isoform>
        <id>Q9DBF7-2</id>
        <name>2</name>
        <sequence type="described" ref="VSP_025798"/>
    </isoform>
    <isoform>
        <id>Q9DBF7-3</id>
        <name>3</name>
        <sequence type="described" ref="VSP_025799"/>
    </isoform>
</comment>
<comment type="similarity">
    <text evidence="5">Belongs to the CWC25 family.</text>
</comment>
<evidence type="ECO:0000250" key="1">
    <source>
        <dbReference type="UniProtKB" id="Q9NXE8"/>
    </source>
</evidence>
<evidence type="ECO:0000255" key="2"/>
<evidence type="ECO:0000256" key="3">
    <source>
        <dbReference type="SAM" id="MobiDB-lite"/>
    </source>
</evidence>
<evidence type="ECO:0000303" key="4">
    <source>
    </source>
</evidence>
<evidence type="ECO:0000305" key="5"/>
<keyword id="KW-0025">Alternative splicing</keyword>
<keyword id="KW-0175">Coiled coil</keyword>
<keyword id="KW-1017">Isopeptide bond</keyword>
<keyword id="KW-0507">mRNA processing</keyword>
<keyword id="KW-0508">mRNA splicing</keyword>
<keyword id="KW-0539">Nucleus</keyword>
<keyword id="KW-0597">Phosphoprotein</keyword>
<keyword id="KW-1185">Reference proteome</keyword>
<keyword id="KW-0747">Spliceosome</keyword>
<keyword id="KW-0832">Ubl conjugation</keyword>
<protein>
    <recommendedName>
        <fullName>Pre-mRNA-splicing factor CWC25 homolog</fullName>
    </recommendedName>
    <alternativeName>
        <fullName>Coiled-coil domain-containing protein 49</fullName>
    </alternativeName>
    <alternativeName>
        <fullName>Spliceosome-associated protein homolog CWC25</fullName>
    </alternativeName>
</protein>
<reference key="1">
    <citation type="journal article" date="2005" name="Science">
        <title>The transcriptional landscape of the mammalian genome.</title>
        <authorList>
            <person name="Carninci P."/>
            <person name="Kasukawa T."/>
            <person name="Katayama S."/>
            <person name="Gough J."/>
            <person name="Frith M.C."/>
            <person name="Maeda N."/>
            <person name="Oyama R."/>
            <person name="Ravasi T."/>
            <person name="Lenhard B."/>
            <person name="Wells C."/>
            <person name="Kodzius R."/>
            <person name="Shimokawa K."/>
            <person name="Bajic V.B."/>
            <person name="Brenner S.E."/>
            <person name="Batalov S."/>
            <person name="Forrest A.R."/>
            <person name="Zavolan M."/>
            <person name="Davis M.J."/>
            <person name="Wilming L.G."/>
            <person name="Aidinis V."/>
            <person name="Allen J.E."/>
            <person name="Ambesi-Impiombato A."/>
            <person name="Apweiler R."/>
            <person name="Aturaliya R.N."/>
            <person name="Bailey T.L."/>
            <person name="Bansal M."/>
            <person name="Baxter L."/>
            <person name="Beisel K.W."/>
            <person name="Bersano T."/>
            <person name="Bono H."/>
            <person name="Chalk A.M."/>
            <person name="Chiu K.P."/>
            <person name="Choudhary V."/>
            <person name="Christoffels A."/>
            <person name="Clutterbuck D.R."/>
            <person name="Crowe M.L."/>
            <person name="Dalla E."/>
            <person name="Dalrymple B.P."/>
            <person name="de Bono B."/>
            <person name="Della Gatta G."/>
            <person name="di Bernardo D."/>
            <person name="Down T."/>
            <person name="Engstrom P."/>
            <person name="Fagiolini M."/>
            <person name="Faulkner G."/>
            <person name="Fletcher C.F."/>
            <person name="Fukushima T."/>
            <person name="Furuno M."/>
            <person name="Futaki S."/>
            <person name="Gariboldi M."/>
            <person name="Georgii-Hemming P."/>
            <person name="Gingeras T.R."/>
            <person name="Gojobori T."/>
            <person name="Green R.E."/>
            <person name="Gustincich S."/>
            <person name="Harbers M."/>
            <person name="Hayashi Y."/>
            <person name="Hensch T.K."/>
            <person name="Hirokawa N."/>
            <person name="Hill D."/>
            <person name="Huminiecki L."/>
            <person name="Iacono M."/>
            <person name="Ikeo K."/>
            <person name="Iwama A."/>
            <person name="Ishikawa T."/>
            <person name="Jakt M."/>
            <person name="Kanapin A."/>
            <person name="Katoh M."/>
            <person name="Kawasawa Y."/>
            <person name="Kelso J."/>
            <person name="Kitamura H."/>
            <person name="Kitano H."/>
            <person name="Kollias G."/>
            <person name="Krishnan S.P."/>
            <person name="Kruger A."/>
            <person name="Kummerfeld S.K."/>
            <person name="Kurochkin I.V."/>
            <person name="Lareau L.F."/>
            <person name="Lazarevic D."/>
            <person name="Lipovich L."/>
            <person name="Liu J."/>
            <person name="Liuni S."/>
            <person name="McWilliam S."/>
            <person name="Madan Babu M."/>
            <person name="Madera M."/>
            <person name="Marchionni L."/>
            <person name="Matsuda H."/>
            <person name="Matsuzawa S."/>
            <person name="Miki H."/>
            <person name="Mignone F."/>
            <person name="Miyake S."/>
            <person name="Morris K."/>
            <person name="Mottagui-Tabar S."/>
            <person name="Mulder N."/>
            <person name="Nakano N."/>
            <person name="Nakauchi H."/>
            <person name="Ng P."/>
            <person name="Nilsson R."/>
            <person name="Nishiguchi S."/>
            <person name="Nishikawa S."/>
            <person name="Nori F."/>
            <person name="Ohara O."/>
            <person name="Okazaki Y."/>
            <person name="Orlando V."/>
            <person name="Pang K.C."/>
            <person name="Pavan W.J."/>
            <person name="Pavesi G."/>
            <person name="Pesole G."/>
            <person name="Petrovsky N."/>
            <person name="Piazza S."/>
            <person name="Reed J."/>
            <person name="Reid J.F."/>
            <person name="Ring B.Z."/>
            <person name="Ringwald M."/>
            <person name="Rost B."/>
            <person name="Ruan Y."/>
            <person name="Salzberg S.L."/>
            <person name="Sandelin A."/>
            <person name="Schneider C."/>
            <person name="Schoenbach C."/>
            <person name="Sekiguchi K."/>
            <person name="Semple C.A."/>
            <person name="Seno S."/>
            <person name="Sessa L."/>
            <person name="Sheng Y."/>
            <person name="Shibata Y."/>
            <person name="Shimada H."/>
            <person name="Shimada K."/>
            <person name="Silva D."/>
            <person name="Sinclair B."/>
            <person name="Sperling S."/>
            <person name="Stupka E."/>
            <person name="Sugiura K."/>
            <person name="Sultana R."/>
            <person name="Takenaka Y."/>
            <person name="Taki K."/>
            <person name="Tammoja K."/>
            <person name="Tan S.L."/>
            <person name="Tang S."/>
            <person name="Taylor M.S."/>
            <person name="Tegner J."/>
            <person name="Teichmann S.A."/>
            <person name="Ueda H.R."/>
            <person name="van Nimwegen E."/>
            <person name="Verardo R."/>
            <person name="Wei C.L."/>
            <person name="Yagi K."/>
            <person name="Yamanishi H."/>
            <person name="Zabarovsky E."/>
            <person name="Zhu S."/>
            <person name="Zimmer A."/>
            <person name="Hide W."/>
            <person name="Bult C."/>
            <person name="Grimmond S.M."/>
            <person name="Teasdale R.D."/>
            <person name="Liu E.T."/>
            <person name="Brusic V."/>
            <person name="Quackenbush J."/>
            <person name="Wahlestedt C."/>
            <person name="Mattick J.S."/>
            <person name="Hume D.A."/>
            <person name="Kai C."/>
            <person name="Sasaki D."/>
            <person name="Tomaru Y."/>
            <person name="Fukuda S."/>
            <person name="Kanamori-Katayama M."/>
            <person name="Suzuki M."/>
            <person name="Aoki J."/>
            <person name="Arakawa T."/>
            <person name="Iida J."/>
            <person name="Imamura K."/>
            <person name="Itoh M."/>
            <person name="Kato T."/>
            <person name="Kawaji H."/>
            <person name="Kawagashira N."/>
            <person name="Kawashima T."/>
            <person name="Kojima M."/>
            <person name="Kondo S."/>
            <person name="Konno H."/>
            <person name="Nakano K."/>
            <person name="Ninomiya N."/>
            <person name="Nishio T."/>
            <person name="Okada M."/>
            <person name="Plessy C."/>
            <person name="Shibata K."/>
            <person name="Shiraki T."/>
            <person name="Suzuki S."/>
            <person name="Tagami M."/>
            <person name="Waki K."/>
            <person name="Watahiki A."/>
            <person name="Okamura-Oho Y."/>
            <person name="Suzuki H."/>
            <person name="Kawai J."/>
            <person name="Hayashizaki Y."/>
        </authorList>
    </citation>
    <scope>NUCLEOTIDE SEQUENCE [LARGE SCALE MRNA] (ISOFORM 1)</scope>
    <source>
        <strain>C57BL/6J</strain>
        <tissue>Liver</tissue>
    </source>
</reference>
<reference key="2">
    <citation type="journal article" date="2009" name="PLoS Biol.">
        <title>Lineage-specific biology revealed by a finished genome assembly of the mouse.</title>
        <authorList>
            <person name="Church D.M."/>
            <person name="Goodstadt L."/>
            <person name="Hillier L.W."/>
            <person name="Zody M.C."/>
            <person name="Goldstein S."/>
            <person name="She X."/>
            <person name="Bult C.J."/>
            <person name="Agarwala R."/>
            <person name="Cherry J.L."/>
            <person name="DiCuccio M."/>
            <person name="Hlavina W."/>
            <person name="Kapustin Y."/>
            <person name="Meric P."/>
            <person name="Maglott D."/>
            <person name="Birtle Z."/>
            <person name="Marques A.C."/>
            <person name="Graves T."/>
            <person name="Zhou S."/>
            <person name="Teague B."/>
            <person name="Potamousis K."/>
            <person name="Churas C."/>
            <person name="Place M."/>
            <person name="Herschleb J."/>
            <person name="Runnheim R."/>
            <person name="Forrest D."/>
            <person name="Amos-Landgraf J."/>
            <person name="Schwartz D.C."/>
            <person name="Cheng Z."/>
            <person name="Lindblad-Toh K."/>
            <person name="Eichler E.E."/>
            <person name="Ponting C.P."/>
        </authorList>
    </citation>
    <scope>NUCLEOTIDE SEQUENCE [LARGE SCALE GENOMIC DNA]</scope>
    <source>
        <strain>C57BL/6J</strain>
    </source>
</reference>
<reference key="3">
    <citation type="journal article" date="2004" name="Genome Res.">
        <title>The status, quality, and expansion of the NIH full-length cDNA project: the Mammalian Gene Collection (MGC).</title>
        <authorList>
            <consortium name="The MGC Project Team"/>
        </authorList>
    </citation>
    <scope>NUCLEOTIDE SEQUENCE [LARGE SCALE MRNA] (ISOFORMS 2 AND 3)</scope>
    <source>
        <strain>C57BL/6J</strain>
        <tissue>Brain</tissue>
        <tissue>Embryo</tissue>
    </source>
</reference>
<proteinExistence type="evidence at transcript level"/>
<dbReference type="EMBL" id="AK004983">
    <property type="protein sequence ID" value="BAB23718.1"/>
    <property type="molecule type" value="mRNA"/>
</dbReference>
<dbReference type="EMBL" id="AL596446">
    <property type="status" value="NOT_ANNOTATED_CDS"/>
    <property type="molecule type" value="Genomic_DNA"/>
</dbReference>
<dbReference type="EMBL" id="BC053447">
    <property type="protein sequence ID" value="AAH53447.1"/>
    <property type="molecule type" value="mRNA"/>
</dbReference>
<dbReference type="EMBL" id="BC079553">
    <property type="protein sequence ID" value="AAH79553.1"/>
    <property type="molecule type" value="mRNA"/>
</dbReference>
<dbReference type="CCDS" id="CCDS25330.1">
    <molecule id="Q9DBF7-1"/>
</dbReference>
<dbReference type="RefSeq" id="NP_080462.2">
    <molecule id="Q9DBF7-1"/>
    <property type="nucleotide sequence ID" value="NM_026186.4"/>
</dbReference>
<dbReference type="BioGRID" id="212219">
    <property type="interactions" value="2"/>
</dbReference>
<dbReference type="FunCoup" id="Q9DBF7">
    <property type="interactions" value="2678"/>
</dbReference>
<dbReference type="IntAct" id="Q9DBF7">
    <property type="interactions" value="1"/>
</dbReference>
<dbReference type="STRING" id="10090.ENSMUSP00000018685"/>
<dbReference type="iPTMnet" id="Q9DBF7"/>
<dbReference type="PhosphoSitePlus" id="Q9DBF7"/>
<dbReference type="jPOST" id="Q9DBF7"/>
<dbReference type="PaxDb" id="10090-ENSMUSP00000018685"/>
<dbReference type="PeptideAtlas" id="Q9DBF7"/>
<dbReference type="ProteomicsDB" id="279304">
    <molecule id="Q9DBF7-1"/>
</dbReference>
<dbReference type="ProteomicsDB" id="279305">
    <molecule id="Q9DBF7-2"/>
</dbReference>
<dbReference type="ProteomicsDB" id="279306">
    <molecule id="Q9DBF7-3"/>
</dbReference>
<dbReference type="Pumba" id="Q9DBF7"/>
<dbReference type="Antibodypedia" id="74912">
    <property type="antibodies" value="25 antibodies from 11 providers"/>
</dbReference>
<dbReference type="DNASU" id="67480"/>
<dbReference type="Ensembl" id="ENSMUST00000018685.9">
    <molecule id="Q9DBF7-1"/>
    <property type="protein sequence ID" value="ENSMUSP00000018685.3"/>
    <property type="gene ID" value="ENSMUSG00000018541.11"/>
</dbReference>
<dbReference type="GeneID" id="67480"/>
<dbReference type="KEGG" id="mmu:67480"/>
<dbReference type="UCSC" id="uc007ler.2">
    <molecule id="Q9DBF7-1"/>
    <property type="organism name" value="mouse"/>
</dbReference>
<dbReference type="AGR" id="MGI:1914730"/>
<dbReference type="CTD" id="54883"/>
<dbReference type="MGI" id="MGI:1914730">
    <property type="gene designation" value="Cwc25"/>
</dbReference>
<dbReference type="VEuPathDB" id="HostDB:ENSMUSG00000018541"/>
<dbReference type="eggNOG" id="KOG3869">
    <property type="taxonomic scope" value="Eukaryota"/>
</dbReference>
<dbReference type="GeneTree" id="ENSGT00440000039055"/>
<dbReference type="HOGENOM" id="CLU_025093_1_0_1"/>
<dbReference type="InParanoid" id="Q9DBF7"/>
<dbReference type="OMA" id="SWHPHTM"/>
<dbReference type="OrthoDB" id="21123at2759"/>
<dbReference type="PhylomeDB" id="Q9DBF7"/>
<dbReference type="TreeFam" id="TF320801"/>
<dbReference type="Reactome" id="R-MMU-72163">
    <property type="pathway name" value="mRNA Splicing - Major Pathway"/>
</dbReference>
<dbReference type="BioGRID-ORCS" id="67480">
    <property type="hits" value="10 hits in 75 CRISPR screens"/>
</dbReference>
<dbReference type="ChiTaRS" id="Cwc25">
    <property type="organism name" value="mouse"/>
</dbReference>
<dbReference type="PRO" id="PR:Q9DBF7"/>
<dbReference type="Proteomes" id="UP000000589">
    <property type="component" value="Chromosome 11"/>
</dbReference>
<dbReference type="RNAct" id="Q9DBF7">
    <property type="molecule type" value="protein"/>
</dbReference>
<dbReference type="Bgee" id="ENSMUSG00000018541">
    <property type="expression patterns" value="Expressed in manus and 215 other cell types or tissues"/>
</dbReference>
<dbReference type="ExpressionAtlas" id="Q9DBF7">
    <property type="expression patterns" value="baseline and differential"/>
</dbReference>
<dbReference type="GO" id="GO:0016607">
    <property type="term" value="C:nuclear speck"/>
    <property type="evidence" value="ECO:0007669"/>
    <property type="project" value="Ensembl"/>
</dbReference>
<dbReference type="GO" id="GO:0005634">
    <property type="term" value="C:nucleus"/>
    <property type="evidence" value="ECO:0000250"/>
    <property type="project" value="UniProtKB"/>
</dbReference>
<dbReference type="GO" id="GO:0071006">
    <property type="term" value="C:U2-type catalytic step 1 spliceosome"/>
    <property type="evidence" value="ECO:0000250"/>
    <property type="project" value="UniProtKB"/>
</dbReference>
<dbReference type="GO" id="GO:0000398">
    <property type="term" value="P:mRNA splicing, via spliceosome"/>
    <property type="evidence" value="ECO:0000250"/>
    <property type="project" value="UniProtKB"/>
</dbReference>
<dbReference type="InterPro" id="IPR019339">
    <property type="entry name" value="CIR_N_dom"/>
</dbReference>
<dbReference type="InterPro" id="IPR022209">
    <property type="entry name" value="CWC25"/>
</dbReference>
<dbReference type="InterPro" id="IPR051376">
    <property type="entry name" value="CWC25_splicing_factor"/>
</dbReference>
<dbReference type="PANTHER" id="PTHR16196">
    <property type="entry name" value="CELL CYCLE CONTROL PROTEIN CWF25"/>
    <property type="match status" value="1"/>
</dbReference>
<dbReference type="PANTHER" id="PTHR16196:SF0">
    <property type="entry name" value="PRE-MRNA-SPLICING FACTOR CWC25 HOMOLOG"/>
    <property type="match status" value="1"/>
</dbReference>
<dbReference type="Pfam" id="PF10197">
    <property type="entry name" value="Cir_N"/>
    <property type="match status" value="1"/>
</dbReference>
<dbReference type="Pfam" id="PF12542">
    <property type="entry name" value="CWC25"/>
    <property type="match status" value="1"/>
</dbReference>
<dbReference type="SMART" id="SM01083">
    <property type="entry name" value="Cir_N"/>
    <property type="match status" value="1"/>
</dbReference>
<accession>Q9DBF7</accession>
<accession>A2A6F4</accession>
<accession>Q6AXH2</accession>
<accession>Q7TSF8</accession>